<evidence type="ECO:0000250" key="1"/>
<organism>
    <name type="scientific">Peptoclostridium acidaminophilum</name>
    <name type="common">Eubacterium acidaminophilum</name>
    <dbReference type="NCBI Taxonomy" id="1731"/>
    <lineage>
        <taxon>Bacteria</taxon>
        <taxon>Bacillati</taxon>
        <taxon>Bacillota</taxon>
        <taxon>Clostridia</taxon>
        <taxon>Peptostreptococcales</taxon>
        <taxon>Peptoclostridiaceae</taxon>
        <taxon>Peptoclostridium</taxon>
    </lineage>
</organism>
<name>GRDG_PEPAC</name>
<sequence>MRLELGKIFIKDVQFGEKTTVEKGVLYVNKQEIIDLAMQDDRIKSVNVELARPGESVRIAPVKDVIEPRVKVEGSGAMFPGMTNKVKTVGSGRTHALVGSTVLTCGKIVGFQEGVIDMSGPIAKYCPFSETNNVCIVVEPVEGLETHAYEAAARMVGLKAAEYVGKAGLDVEPDEVVVYETKPLLEQIKEYPDLPKVAYVHMLQSQGLLHDTYYYGVDAKQFIPTFMYPTEIMDGAITSGNCVAPCDKVTTFHHLNNPVIEDLYKRHGKDLNSVGVILTNENVYLADKERCSDMVGKLVEFLGIDGVLITEEGYGNPDTDLMMNCKKCTQAGAKVVLITDEFPGRDGKSQSVADATPEADAVASCGQGNLIEHFPAMDKVIGMLDYVETMIGGYKGCINEDGSFDAELQIIIASTIANGYNKLTARFY</sequence>
<keyword id="KW-0560">Oxidoreductase</keyword>
<keyword id="KW-0670">Pyruvate</keyword>
<feature type="chain" id="PRO_0000045762" description="Sarcosine reductase complex component B beta chain" evidence="1">
    <location>
        <begin position="1"/>
        <end position="241"/>
    </location>
</feature>
<feature type="chain" id="PRO_0000045763" description="Sarcosine reductase complex component B alpha chain" evidence="1">
    <location>
        <begin position="242"/>
        <end position="428"/>
    </location>
</feature>
<feature type="modified residue" description="Pyruvic acid (Cys)" evidence="1">
    <location>
        <position position="242"/>
    </location>
</feature>
<reference key="1">
    <citation type="submission" date="1998-08" db="EMBL/GenBank/DDBJ databases">
        <authorList>
            <person name="Sonntag D."/>
            <person name="Soehling B."/>
            <person name="Andreesen J.R."/>
        </authorList>
    </citation>
    <scope>NUCLEOTIDE SEQUENCE [GENOMIC DNA]</scope>
    <source>
        <strain>ATCC 49065 / DSM 3953 / al-2</strain>
    </source>
</reference>
<protein>
    <recommendedName>
        <fullName>Sarcosine reductase complex component B subunit alpha</fullName>
        <ecNumber>1.21.4.3</ecNumber>
    </recommendedName>
    <alternativeName>
        <fullName>Selenoprotein PB alpha</fullName>
    </alternativeName>
    <component>
        <recommendedName>
            <fullName>Sarcosine reductase complex component B beta chain</fullName>
        </recommendedName>
    </component>
    <component>
        <recommendedName>
            <fullName>Sarcosine reductase complex component B alpha chain</fullName>
        </recommendedName>
    </component>
</protein>
<dbReference type="EC" id="1.21.4.3"/>
<dbReference type="EMBL" id="Y17872">
    <property type="protein sequence ID" value="CAA76906.1"/>
    <property type="molecule type" value="Genomic_DNA"/>
</dbReference>
<dbReference type="PIR" id="T08626">
    <property type="entry name" value="T08626"/>
</dbReference>
<dbReference type="GO" id="GO:0033794">
    <property type="term" value="F:sarcosine reductase activity"/>
    <property type="evidence" value="ECO:0007669"/>
    <property type="project" value="UniProtKB-EC"/>
</dbReference>
<dbReference type="InterPro" id="IPR016585">
    <property type="entry name" value="Gly/sarc/bet_Rdtase_B_asu/bsu"/>
</dbReference>
<dbReference type="InterPro" id="IPR015417">
    <property type="entry name" value="Gly_reductase_pB_sua/b"/>
</dbReference>
<dbReference type="InterPro" id="IPR053594">
    <property type="entry name" value="Sarcosine_Reductase_Comp"/>
</dbReference>
<dbReference type="NCBIfam" id="NF040793">
    <property type="entry name" value="sarcosine_GrdG"/>
    <property type="match status" value="1"/>
</dbReference>
<dbReference type="Pfam" id="PF09338">
    <property type="entry name" value="Gly_reductase"/>
    <property type="match status" value="1"/>
</dbReference>
<dbReference type="PIRSF" id="PIRSF011588">
    <property type="entry name" value="Gly_sarc_betain_red_a/b"/>
    <property type="match status" value="1"/>
</dbReference>
<proteinExistence type="inferred from homology"/>
<accession>O86185</accession>
<comment type="function">
    <text>In the first step of sarcosine reductase, the substrate is bound to component PB via a Schiff base intermediate. Then the PB-activated substrate is nucleophilically attacked by the selenol anion of component PA to transform it to a carboxymethylated selenoether and the respective amine. By action of component PC, acetyl phosphate is formed, leaving component PA in its oxidized state. Finally component PA becomes reduced by the thioredoxin system to start a new catalytic cycle of reductive deamination.</text>
</comment>
<comment type="catalytic activity">
    <reaction>
        <text>acetyl phosphate + methylamine + [thioredoxin]-disulfide + H2O = sarcosine + [thioredoxin]-dithiol + phosphate + H(+)</text>
        <dbReference type="Rhea" id="RHEA:12825"/>
        <dbReference type="Rhea" id="RHEA-COMP:10698"/>
        <dbReference type="Rhea" id="RHEA-COMP:10700"/>
        <dbReference type="ChEBI" id="CHEBI:15377"/>
        <dbReference type="ChEBI" id="CHEBI:15378"/>
        <dbReference type="ChEBI" id="CHEBI:22191"/>
        <dbReference type="ChEBI" id="CHEBI:29950"/>
        <dbReference type="ChEBI" id="CHEBI:43474"/>
        <dbReference type="ChEBI" id="CHEBI:50058"/>
        <dbReference type="ChEBI" id="CHEBI:57433"/>
        <dbReference type="ChEBI" id="CHEBI:59338"/>
        <dbReference type="EC" id="1.21.4.3"/>
    </reaction>
</comment>
<comment type="subunit">
    <text>Heterotetramer of two alpha and two beta subunits. Component of the sarcosine reductase complex, together with components A and C. PB is substrate specific.</text>
</comment>
<comment type="PTM">
    <text evidence="1">The peptide chain is cleaved into beta and alpha chains, and the alpha chain N-terminal cysteine is deaminated and oxidized to form a reactive pyruvoyl group.</text>
</comment>
<gene>
    <name type="primary">grdG</name>
</gene>